<reference key="1">
    <citation type="journal article" date="2001" name="Lancet">
        <title>Whole genome sequencing of meticillin-resistant Staphylococcus aureus.</title>
        <authorList>
            <person name="Kuroda M."/>
            <person name="Ohta T."/>
            <person name="Uchiyama I."/>
            <person name="Baba T."/>
            <person name="Yuzawa H."/>
            <person name="Kobayashi I."/>
            <person name="Cui L."/>
            <person name="Oguchi A."/>
            <person name="Aoki K."/>
            <person name="Nagai Y."/>
            <person name="Lian J.-Q."/>
            <person name="Ito T."/>
            <person name="Kanamori M."/>
            <person name="Matsumaru H."/>
            <person name="Maruyama A."/>
            <person name="Murakami H."/>
            <person name="Hosoyama A."/>
            <person name="Mizutani-Ui Y."/>
            <person name="Takahashi N.K."/>
            <person name="Sawano T."/>
            <person name="Inoue R."/>
            <person name="Kaito C."/>
            <person name="Sekimizu K."/>
            <person name="Hirakawa H."/>
            <person name="Kuhara S."/>
            <person name="Goto S."/>
            <person name="Yabuzaki J."/>
            <person name="Kanehisa M."/>
            <person name="Yamashita A."/>
            <person name="Oshima K."/>
            <person name="Furuya K."/>
            <person name="Yoshino C."/>
            <person name="Shiba T."/>
            <person name="Hattori M."/>
            <person name="Ogasawara N."/>
            <person name="Hayashi H."/>
            <person name="Hiramatsu K."/>
        </authorList>
    </citation>
    <scope>NUCLEOTIDE SEQUENCE [LARGE SCALE GENOMIC DNA]</scope>
    <source>
        <strain>N315</strain>
    </source>
</reference>
<name>TILS_STAAN</name>
<proteinExistence type="inferred from homology"/>
<accession>Q7A7A6</accession>
<organism>
    <name type="scientific">Staphylococcus aureus (strain N315)</name>
    <dbReference type="NCBI Taxonomy" id="158879"/>
    <lineage>
        <taxon>Bacteria</taxon>
        <taxon>Bacillati</taxon>
        <taxon>Bacillota</taxon>
        <taxon>Bacilli</taxon>
        <taxon>Bacillales</taxon>
        <taxon>Staphylococcaceae</taxon>
        <taxon>Staphylococcus</taxon>
    </lineage>
</organism>
<evidence type="ECO:0000255" key="1">
    <source>
        <dbReference type="HAMAP-Rule" id="MF_01161"/>
    </source>
</evidence>
<feature type="chain" id="PRO_0000181767" description="tRNA(Ile)-lysidine synthase">
    <location>
        <begin position="1"/>
        <end position="431"/>
    </location>
</feature>
<feature type="binding site" evidence="1">
    <location>
        <begin position="19"/>
        <end position="24"/>
    </location>
    <ligand>
        <name>ATP</name>
        <dbReference type="ChEBI" id="CHEBI:30616"/>
    </ligand>
</feature>
<comment type="function">
    <text evidence="1">Ligates lysine onto the cytidine present at position 34 of the AUA codon-specific tRNA(Ile) that contains the anticodon CAU, in an ATP-dependent manner. Cytidine is converted to lysidine, thus changing the amino acid specificity of the tRNA from methionine to isoleucine.</text>
</comment>
<comment type="catalytic activity">
    <reaction evidence="1">
        <text>cytidine(34) in tRNA(Ile2) + L-lysine + ATP = lysidine(34) in tRNA(Ile2) + AMP + diphosphate + H(+)</text>
        <dbReference type="Rhea" id="RHEA:43744"/>
        <dbReference type="Rhea" id="RHEA-COMP:10625"/>
        <dbReference type="Rhea" id="RHEA-COMP:10670"/>
        <dbReference type="ChEBI" id="CHEBI:15378"/>
        <dbReference type="ChEBI" id="CHEBI:30616"/>
        <dbReference type="ChEBI" id="CHEBI:32551"/>
        <dbReference type="ChEBI" id="CHEBI:33019"/>
        <dbReference type="ChEBI" id="CHEBI:82748"/>
        <dbReference type="ChEBI" id="CHEBI:83665"/>
        <dbReference type="ChEBI" id="CHEBI:456215"/>
        <dbReference type="EC" id="6.3.4.19"/>
    </reaction>
</comment>
<comment type="subcellular location">
    <subcellularLocation>
        <location evidence="1">Cytoplasm</location>
    </subcellularLocation>
</comment>
<comment type="domain">
    <text>The N-terminal region contains the highly conserved SGGXDS motif, predicted to be a P-loop motif involved in ATP binding.</text>
</comment>
<comment type="similarity">
    <text evidence="1">Belongs to the tRNA(Ile)-lysidine synthase family.</text>
</comment>
<keyword id="KW-0067">ATP-binding</keyword>
<keyword id="KW-0963">Cytoplasm</keyword>
<keyword id="KW-0436">Ligase</keyword>
<keyword id="KW-0547">Nucleotide-binding</keyword>
<keyword id="KW-0819">tRNA processing</keyword>
<sequence>MQLNSNGWHVDDHIVVAVSTGIDSMCLLYQLLNDYKDSYRKLTCLHVNHGVRSASIEEARFLEAYCERHHIDLHIKKLDLSHSLDRNNSIQNEARIKRYEWFDEMMNVLEADVLLTAHHLDDQLETIMYRIFNGKSTRNKLGFDELSKRKGYQIYRPLLAVSKKEIKQFQERYHIPYFEDESNKDNKYIRNDIRNRIIPAIDENNQLKVSHLLKLKQWHDEQYDILQYSAKQFIQEFVKFDEQSKYLEVSRQAFNNLPNSLKMVVLDCLLSKYYELFNISAKTYEEWFKQFSSKKAQFSINLTDKWIIQIAYGKLIIMAKNNGDTYFRVQTIKKPGNYFFNKYRLEIHSNLPKCLFPLTVRTRQSGDTFKLNGRDGYKKVNRLFIDCKVPQWVRDQMPIVLDKQQRIIAVGDLYQQQTIKKWIIISKNGDE</sequence>
<dbReference type="EC" id="6.3.4.19" evidence="1"/>
<dbReference type="EMBL" id="BA000018">
    <property type="protein sequence ID" value="BAB41697.1"/>
    <property type="molecule type" value="Genomic_DNA"/>
</dbReference>
<dbReference type="PIR" id="F89817">
    <property type="entry name" value="F89817"/>
</dbReference>
<dbReference type="RefSeq" id="WP_001176709.1">
    <property type="nucleotide sequence ID" value="NC_002745.2"/>
</dbReference>
<dbReference type="SMR" id="Q7A7A6"/>
<dbReference type="EnsemblBacteria" id="BAB41697">
    <property type="protein sequence ID" value="BAB41697"/>
    <property type="gene ID" value="BAB41697"/>
</dbReference>
<dbReference type="KEGG" id="sau:SA0467"/>
<dbReference type="HOGENOM" id="CLU_018869_0_2_9"/>
<dbReference type="GO" id="GO:0005737">
    <property type="term" value="C:cytoplasm"/>
    <property type="evidence" value="ECO:0007669"/>
    <property type="project" value="UniProtKB-SubCell"/>
</dbReference>
<dbReference type="GO" id="GO:0005524">
    <property type="term" value="F:ATP binding"/>
    <property type="evidence" value="ECO:0007669"/>
    <property type="project" value="UniProtKB-KW"/>
</dbReference>
<dbReference type="GO" id="GO:0032267">
    <property type="term" value="F:tRNA(Ile)-lysidine synthase activity"/>
    <property type="evidence" value="ECO:0007669"/>
    <property type="project" value="UniProtKB-EC"/>
</dbReference>
<dbReference type="GO" id="GO:0006400">
    <property type="term" value="P:tRNA modification"/>
    <property type="evidence" value="ECO:0007669"/>
    <property type="project" value="UniProtKB-UniRule"/>
</dbReference>
<dbReference type="CDD" id="cd01992">
    <property type="entry name" value="TilS_N"/>
    <property type="match status" value="1"/>
</dbReference>
<dbReference type="Gene3D" id="3.40.50.620">
    <property type="entry name" value="HUPs"/>
    <property type="match status" value="1"/>
</dbReference>
<dbReference type="HAMAP" id="MF_01161">
    <property type="entry name" value="tRNA_Ile_lys_synt"/>
    <property type="match status" value="1"/>
</dbReference>
<dbReference type="InterPro" id="IPR012796">
    <property type="entry name" value="Lysidine-tRNA-synth_C"/>
</dbReference>
<dbReference type="InterPro" id="IPR014729">
    <property type="entry name" value="Rossmann-like_a/b/a_fold"/>
</dbReference>
<dbReference type="InterPro" id="IPR011063">
    <property type="entry name" value="TilS/TtcA_N"/>
</dbReference>
<dbReference type="InterPro" id="IPR012094">
    <property type="entry name" value="tRNA_Ile_lys_synt"/>
</dbReference>
<dbReference type="InterPro" id="IPR012795">
    <property type="entry name" value="tRNA_Ile_lys_synt_N"/>
</dbReference>
<dbReference type="NCBIfam" id="TIGR02433">
    <property type="entry name" value="lysidine_TilS_C"/>
    <property type="match status" value="1"/>
</dbReference>
<dbReference type="NCBIfam" id="TIGR02432">
    <property type="entry name" value="lysidine_TilS_N"/>
    <property type="match status" value="1"/>
</dbReference>
<dbReference type="PANTHER" id="PTHR43033">
    <property type="entry name" value="TRNA(ILE)-LYSIDINE SYNTHASE-RELATED"/>
    <property type="match status" value="1"/>
</dbReference>
<dbReference type="PANTHER" id="PTHR43033:SF1">
    <property type="entry name" value="TRNA(ILE)-LYSIDINE SYNTHASE-RELATED"/>
    <property type="match status" value="1"/>
</dbReference>
<dbReference type="Pfam" id="PF01171">
    <property type="entry name" value="ATP_bind_3"/>
    <property type="match status" value="1"/>
</dbReference>
<dbReference type="Pfam" id="PF11734">
    <property type="entry name" value="TilS_C"/>
    <property type="match status" value="1"/>
</dbReference>
<dbReference type="SMART" id="SM00977">
    <property type="entry name" value="TilS_C"/>
    <property type="match status" value="1"/>
</dbReference>
<dbReference type="SUPFAM" id="SSF52402">
    <property type="entry name" value="Adenine nucleotide alpha hydrolases-like"/>
    <property type="match status" value="1"/>
</dbReference>
<dbReference type="SUPFAM" id="SSF56037">
    <property type="entry name" value="PheT/TilS domain"/>
    <property type="match status" value="1"/>
</dbReference>
<gene>
    <name evidence="1" type="primary">tilS</name>
    <name type="ordered locus">SA0467</name>
</gene>
<protein>
    <recommendedName>
        <fullName evidence="1">tRNA(Ile)-lysidine synthase</fullName>
        <ecNumber evidence="1">6.3.4.19</ecNumber>
    </recommendedName>
    <alternativeName>
        <fullName evidence="1">tRNA(Ile)-2-lysyl-cytidine synthase</fullName>
    </alternativeName>
    <alternativeName>
        <fullName evidence="1">tRNA(Ile)-lysidine synthetase</fullName>
    </alternativeName>
</protein>